<gene>
    <name evidence="1" type="primary">hisZ</name>
    <name type="ordered locus">RC1_1719</name>
</gene>
<sequence length="386" mass="41226">MTDDPISPSMALLPAGLRDLLPPDAEHEARVVGRLMKEFTRHGYERVKPPLIEFEEGLLSGPGRALAKQTFRLMDPISQQMMGVRSDMTLQVARIAATRMPKSPRPLRLSYAGQVLRVKGTQLRPERQFGQVGVELIGGMQVEADAEVVLLAASALAAVGADGVTIDLTVPTLVPTVCRALNLSEAETRCVRDALDRRDTAAVAAIGGPAGDLLVRIMAAGGPAAAAVAALSAVDLPTVAEPDRWRLTEVVKLLTAAAPHLNLTIDPVEQRGFEYQTGLSFTIFARGVTGELGRGGRYRSGGDGEPATGFTLYTDTVLRAIPGPPPPRRILLPHGTPYAEGARLRDEGWQTVAVLEPGADLSAEARRQGCGHLWAGGRIQEIQDRP</sequence>
<dbReference type="EMBL" id="CP000613">
    <property type="protein sequence ID" value="ACI99117.1"/>
    <property type="molecule type" value="Genomic_DNA"/>
</dbReference>
<dbReference type="RefSeq" id="WP_012566902.1">
    <property type="nucleotide sequence ID" value="NC_011420.2"/>
</dbReference>
<dbReference type="SMR" id="B6INM0"/>
<dbReference type="STRING" id="414684.RC1_1719"/>
<dbReference type="KEGG" id="rce:RC1_1719"/>
<dbReference type="eggNOG" id="COG3705">
    <property type="taxonomic scope" value="Bacteria"/>
</dbReference>
<dbReference type="HOGENOM" id="CLU_025113_0_1_5"/>
<dbReference type="OrthoDB" id="9769617at2"/>
<dbReference type="UniPathway" id="UPA00031">
    <property type="reaction ID" value="UER00006"/>
</dbReference>
<dbReference type="Proteomes" id="UP000001591">
    <property type="component" value="Chromosome"/>
</dbReference>
<dbReference type="GO" id="GO:0005737">
    <property type="term" value="C:cytoplasm"/>
    <property type="evidence" value="ECO:0007669"/>
    <property type="project" value="UniProtKB-SubCell"/>
</dbReference>
<dbReference type="GO" id="GO:0004821">
    <property type="term" value="F:histidine-tRNA ligase activity"/>
    <property type="evidence" value="ECO:0007669"/>
    <property type="project" value="TreeGrafter"/>
</dbReference>
<dbReference type="GO" id="GO:0006427">
    <property type="term" value="P:histidyl-tRNA aminoacylation"/>
    <property type="evidence" value="ECO:0007669"/>
    <property type="project" value="TreeGrafter"/>
</dbReference>
<dbReference type="GO" id="GO:0000105">
    <property type="term" value="P:L-histidine biosynthetic process"/>
    <property type="evidence" value="ECO:0007669"/>
    <property type="project" value="UniProtKB-UniRule"/>
</dbReference>
<dbReference type="Gene3D" id="3.30.930.10">
    <property type="entry name" value="Bira Bifunctional Protein, Domain 2"/>
    <property type="match status" value="1"/>
</dbReference>
<dbReference type="HAMAP" id="MF_00125">
    <property type="entry name" value="HisZ"/>
    <property type="match status" value="1"/>
</dbReference>
<dbReference type="InterPro" id="IPR006195">
    <property type="entry name" value="aa-tRNA-synth_II"/>
</dbReference>
<dbReference type="InterPro" id="IPR045864">
    <property type="entry name" value="aa-tRNA-synth_II/BPL/LPL"/>
</dbReference>
<dbReference type="InterPro" id="IPR041715">
    <property type="entry name" value="HisRS-like_core"/>
</dbReference>
<dbReference type="InterPro" id="IPR004516">
    <property type="entry name" value="HisRS/HisZ"/>
</dbReference>
<dbReference type="InterPro" id="IPR004517">
    <property type="entry name" value="HisZ"/>
</dbReference>
<dbReference type="PANTHER" id="PTHR43707:SF1">
    <property type="entry name" value="HISTIDINE--TRNA LIGASE, MITOCHONDRIAL-RELATED"/>
    <property type="match status" value="1"/>
</dbReference>
<dbReference type="PANTHER" id="PTHR43707">
    <property type="entry name" value="HISTIDYL-TRNA SYNTHETASE"/>
    <property type="match status" value="1"/>
</dbReference>
<dbReference type="Pfam" id="PF13393">
    <property type="entry name" value="tRNA-synt_His"/>
    <property type="match status" value="1"/>
</dbReference>
<dbReference type="PIRSF" id="PIRSF001549">
    <property type="entry name" value="His-tRNA_synth"/>
    <property type="match status" value="1"/>
</dbReference>
<dbReference type="SUPFAM" id="SSF55681">
    <property type="entry name" value="Class II aaRS and biotin synthetases"/>
    <property type="match status" value="1"/>
</dbReference>
<dbReference type="PROSITE" id="PS50862">
    <property type="entry name" value="AA_TRNA_LIGASE_II"/>
    <property type="match status" value="1"/>
</dbReference>
<organism>
    <name type="scientific">Rhodospirillum centenum (strain ATCC 51521 / SW)</name>
    <dbReference type="NCBI Taxonomy" id="414684"/>
    <lineage>
        <taxon>Bacteria</taxon>
        <taxon>Pseudomonadati</taxon>
        <taxon>Pseudomonadota</taxon>
        <taxon>Alphaproteobacteria</taxon>
        <taxon>Rhodospirillales</taxon>
        <taxon>Rhodospirillaceae</taxon>
        <taxon>Rhodospirillum</taxon>
    </lineage>
</organism>
<evidence type="ECO:0000255" key="1">
    <source>
        <dbReference type="HAMAP-Rule" id="MF_00125"/>
    </source>
</evidence>
<reference key="1">
    <citation type="submission" date="2007-03" db="EMBL/GenBank/DDBJ databases">
        <title>Genome sequence of Rhodospirillum centenum.</title>
        <authorList>
            <person name="Touchman J.W."/>
            <person name="Bauer C."/>
            <person name="Blankenship R.E."/>
        </authorList>
    </citation>
    <scope>NUCLEOTIDE SEQUENCE [LARGE SCALE GENOMIC DNA]</scope>
    <source>
        <strain>ATCC 51521 / SW</strain>
    </source>
</reference>
<comment type="function">
    <text evidence="1">Required for the first step of histidine biosynthesis. May allow the feedback regulation of ATP phosphoribosyltransferase activity by histidine.</text>
</comment>
<comment type="pathway">
    <text evidence="1">Amino-acid biosynthesis; L-histidine biosynthesis; L-histidine from 5-phospho-alpha-D-ribose 1-diphosphate: step 1/9.</text>
</comment>
<comment type="subunit">
    <text evidence="1">Heteromultimer composed of HisG and HisZ subunits.</text>
</comment>
<comment type="subcellular location">
    <subcellularLocation>
        <location evidence="1">Cytoplasm</location>
    </subcellularLocation>
</comment>
<comment type="miscellaneous">
    <text>This function is generally fulfilled by the C-terminal part of HisG, which is missing in some bacteria such as this one.</text>
</comment>
<comment type="similarity">
    <text evidence="1">Belongs to the class-II aminoacyl-tRNA synthetase family. HisZ subfamily.</text>
</comment>
<feature type="chain" id="PRO_1000095471" description="ATP phosphoribosyltransferase regulatory subunit">
    <location>
        <begin position="1"/>
        <end position="386"/>
    </location>
</feature>
<protein>
    <recommendedName>
        <fullName evidence="1">ATP phosphoribosyltransferase regulatory subunit</fullName>
    </recommendedName>
</protein>
<keyword id="KW-0028">Amino-acid biosynthesis</keyword>
<keyword id="KW-0963">Cytoplasm</keyword>
<keyword id="KW-0368">Histidine biosynthesis</keyword>
<keyword id="KW-1185">Reference proteome</keyword>
<name>HISZ_RHOCS</name>
<proteinExistence type="inferred from homology"/>
<accession>B6INM0</accession>